<organism>
    <name type="scientific">Hydra viridissima</name>
    <name type="common">Green hydra</name>
    <name type="synonym">Chlorohydra viridissima</name>
    <dbReference type="NCBI Taxonomy" id="6082"/>
    <lineage>
        <taxon>Eukaryota</taxon>
        <taxon>Metazoa</taxon>
        <taxon>Cnidaria</taxon>
        <taxon>Hydrozoa</taxon>
        <taxon>Hydroidolina</taxon>
        <taxon>Anthoathecata</taxon>
        <taxon>Aplanulata</taxon>
        <taxon>Hydridae</taxon>
        <taxon>Hydra</taxon>
    </lineage>
</organism>
<dbReference type="EMBL" id="X63849">
    <property type="protein sequence ID" value="CAA45333.1"/>
    <property type="molecule type" value="mRNA"/>
</dbReference>
<dbReference type="PIR" id="S25417">
    <property type="entry name" value="S25417"/>
</dbReference>
<dbReference type="SMR" id="P38984"/>
<dbReference type="GO" id="GO:0022627">
    <property type="term" value="C:cytosolic small ribosomal subunit"/>
    <property type="evidence" value="ECO:0007669"/>
    <property type="project" value="UniProtKB-UniRule"/>
</dbReference>
<dbReference type="GO" id="GO:0003735">
    <property type="term" value="F:structural constituent of ribosome"/>
    <property type="evidence" value="ECO:0007669"/>
    <property type="project" value="UniProtKB-UniRule"/>
</dbReference>
<dbReference type="GO" id="GO:0000028">
    <property type="term" value="P:ribosomal small subunit assembly"/>
    <property type="evidence" value="ECO:0007669"/>
    <property type="project" value="UniProtKB-UniRule"/>
</dbReference>
<dbReference type="GO" id="GO:0006412">
    <property type="term" value="P:translation"/>
    <property type="evidence" value="ECO:0007669"/>
    <property type="project" value="UniProtKB-UniRule"/>
</dbReference>
<dbReference type="CDD" id="cd01425">
    <property type="entry name" value="RPS2"/>
    <property type="match status" value="1"/>
</dbReference>
<dbReference type="FunFam" id="3.40.50.10490:FF:000012">
    <property type="entry name" value="40S ribosomal protein SA"/>
    <property type="match status" value="1"/>
</dbReference>
<dbReference type="Gene3D" id="3.40.50.10490">
    <property type="entry name" value="Glucose-6-phosphate isomerase like protein, domain 1"/>
    <property type="match status" value="1"/>
</dbReference>
<dbReference type="HAMAP" id="MF_03015">
    <property type="entry name" value="Ribosomal_S2_euk"/>
    <property type="match status" value="1"/>
</dbReference>
<dbReference type="InterPro" id="IPR001865">
    <property type="entry name" value="Ribosomal_uS2"/>
</dbReference>
<dbReference type="InterPro" id="IPR032281">
    <property type="entry name" value="Ribosomal_uS2_C"/>
</dbReference>
<dbReference type="InterPro" id="IPR018130">
    <property type="entry name" value="Ribosomal_uS2_CS"/>
</dbReference>
<dbReference type="InterPro" id="IPR027498">
    <property type="entry name" value="Ribosomal_uS2_euk"/>
</dbReference>
<dbReference type="InterPro" id="IPR005707">
    <property type="entry name" value="Ribosomal_uS2_euk/arc"/>
</dbReference>
<dbReference type="InterPro" id="IPR023591">
    <property type="entry name" value="Ribosomal_uS2_flav_dom_sf"/>
</dbReference>
<dbReference type="NCBIfam" id="TIGR01012">
    <property type="entry name" value="uS2_euk_arch"/>
    <property type="match status" value="1"/>
</dbReference>
<dbReference type="PANTHER" id="PTHR11489">
    <property type="entry name" value="40S RIBOSOMAL PROTEIN SA"/>
    <property type="match status" value="1"/>
</dbReference>
<dbReference type="Pfam" id="PF16122">
    <property type="entry name" value="40S_SA_C"/>
    <property type="match status" value="1"/>
</dbReference>
<dbReference type="Pfam" id="PF00318">
    <property type="entry name" value="Ribosomal_S2"/>
    <property type="match status" value="1"/>
</dbReference>
<dbReference type="PRINTS" id="PR00395">
    <property type="entry name" value="RIBOSOMALS2"/>
</dbReference>
<dbReference type="SUPFAM" id="SSF52313">
    <property type="entry name" value="Ribosomal protein S2"/>
    <property type="match status" value="1"/>
</dbReference>
<dbReference type="PROSITE" id="PS00962">
    <property type="entry name" value="RIBOSOMAL_S2_1"/>
    <property type="match status" value="1"/>
</dbReference>
<dbReference type="PROSITE" id="PS00963">
    <property type="entry name" value="RIBOSOMAL_S2_2"/>
    <property type="match status" value="1"/>
</dbReference>
<reference key="1">
    <citation type="journal article" date="1991" name="J. Cell Sci.">
        <title>A 33 kDa protein with sequence homology to the 'laminin binding protein' is associated with the cytoskeleton in hydra and in mammalian cells.</title>
        <authorList>
            <person name="Keppel E."/>
            <person name="Schaller H.C."/>
        </authorList>
    </citation>
    <scope>NUCLEOTIDE SEQUENCE [MRNA]</scope>
</reference>
<feature type="chain" id="PRO_0000134362" description="Small ribosomal subunit protein uS2">
    <location>
        <begin position="1"/>
        <end position="293"/>
    </location>
</feature>
<feature type="region of interest" description="Disordered" evidence="2">
    <location>
        <begin position="219"/>
        <end position="293"/>
    </location>
</feature>
<name>RSSA_HYDVD</name>
<keyword id="KW-0963">Cytoplasm</keyword>
<keyword id="KW-0687">Ribonucleoprotein</keyword>
<keyword id="KW-0689">Ribosomal protein</keyword>
<protein>
    <recommendedName>
        <fullName evidence="1">Small ribosomal subunit protein uS2</fullName>
    </recommendedName>
    <alternativeName>
        <fullName>33 kDa laminin-binding protein</fullName>
    </alternativeName>
    <alternativeName>
        <fullName evidence="3">40S ribosomal protein SA</fullName>
    </alternativeName>
    <alternativeName>
        <fullName>p40</fullName>
    </alternativeName>
</protein>
<proteinExistence type="evidence at transcript level"/>
<accession>P38984</accession>
<comment type="function">
    <text evidence="1">Required for the assembly and/or stability of the 40S ribosomal subunit. Required for the processing of the 20S rRNA-precursor to mature 18S rRNA in a late step of the maturation of 40S ribosomal subunits.</text>
</comment>
<comment type="subunit">
    <text evidence="1">Component of the small ribosomal subunit. Mature ribosomes consist of a small (40S) and a large (60S) subunit. The 40S subunit contains about 33 different proteins and 1 molecule of RNA (18S). The 60S subunit contains about 49 different proteins and 3 molecules of RNA (28S, 5.8S and 5S). Interacts with ribosomal protein S21.</text>
</comment>
<comment type="subcellular location">
    <subcellularLocation>
        <location>Cytoplasm</location>
    </subcellularLocation>
</comment>
<comment type="similarity">
    <text evidence="1">Belongs to the universal ribosomal protein uS2 family.</text>
</comment>
<sequence length="293" mass="32145">MSEGIDALSLKEEDVVKFLAAGVHLGSTNVGSSCQGYVFKRKSDGIHIINLRKTWEKLILAARIIASIENPADVCVISSRPYGTRAVLKFAQSTGAIPIAGRFTPGTFTNQIQKRFREPRLLISTDPQHDNQALTEASYVNIPVIALCNTDSPLRFVDCAIPCNNRGIQSIGTMWWILAREVLHLRGIISRKTPWNVMPDLFFYRDPEDIEKEEQAAAIASAKPDEPYQPDFSGNVDQSAAGADWGDQPVVTGADWTAEPSVSKDWAAEPAGWEADTTAVSGDWATPKTEDWA</sequence>
<evidence type="ECO:0000255" key="1">
    <source>
        <dbReference type="HAMAP-Rule" id="MF_03015"/>
    </source>
</evidence>
<evidence type="ECO:0000256" key="2">
    <source>
        <dbReference type="SAM" id="MobiDB-lite"/>
    </source>
</evidence>
<evidence type="ECO:0000305" key="3"/>